<organism>
    <name type="scientific">Buchnera aphidicola subsp. Baizongia pistaciae (strain Bp)</name>
    <dbReference type="NCBI Taxonomy" id="224915"/>
    <lineage>
        <taxon>Bacteria</taxon>
        <taxon>Pseudomonadati</taxon>
        <taxon>Pseudomonadota</taxon>
        <taxon>Gammaproteobacteria</taxon>
        <taxon>Enterobacterales</taxon>
        <taxon>Erwiniaceae</taxon>
        <taxon>Buchnera</taxon>
    </lineage>
</organism>
<feature type="chain" id="PRO_0000159032" description="Sulfur carrier protein TusA">
    <location>
        <begin position="1"/>
        <end position="79"/>
    </location>
</feature>
<feature type="active site" description="Cysteine persulfide intermediate" evidence="1">
    <location>
        <position position="15"/>
    </location>
</feature>
<reference key="1">
    <citation type="journal article" date="2003" name="Proc. Natl. Acad. Sci. U.S.A.">
        <title>Reductive genome evolution in Buchnera aphidicola.</title>
        <authorList>
            <person name="van Ham R.C.H.J."/>
            <person name="Kamerbeek J."/>
            <person name="Palacios C."/>
            <person name="Rausell C."/>
            <person name="Abascal F."/>
            <person name="Bastolla U."/>
            <person name="Fernandez J.M."/>
            <person name="Jimenez L."/>
            <person name="Postigo M."/>
            <person name="Silva F.J."/>
            <person name="Tamames J."/>
            <person name="Viguera E."/>
            <person name="Latorre A."/>
            <person name="Valencia A."/>
            <person name="Moran F."/>
            <person name="Moya A."/>
        </authorList>
    </citation>
    <scope>NUCLEOTIDE SEQUENCE [LARGE SCALE GENOMIC DNA]</scope>
    <source>
        <strain>Bp</strain>
    </source>
</reference>
<keyword id="KW-0963">Cytoplasm</keyword>
<keyword id="KW-1185">Reference proteome</keyword>
<keyword id="KW-0819">tRNA processing</keyword>
<accession>Q89AB9</accession>
<proteinExistence type="inferred from homology"/>
<sequence>MTVDNNVLDLRKLRCPEPIMLLRKKIREIKNGTTLLILSDDPSTIREIPQYCKFMHHKLLKINTKDTIYKFWIQKTHKM</sequence>
<gene>
    <name evidence="1" type="primary">tusA</name>
    <name type="ordered locus">bbp_397</name>
</gene>
<protein>
    <recommendedName>
        <fullName evidence="1">Sulfur carrier protein TusA</fullName>
    </recommendedName>
    <alternativeName>
        <fullName evidence="1">Sulfur mediator TusA</fullName>
    </alternativeName>
    <alternativeName>
        <fullName evidence="1">Sulfur transfer protein TusA</fullName>
    </alternativeName>
    <alternativeName>
        <fullName evidence="1">tRNA 2-thiouridine synthesizing protein A</fullName>
    </alternativeName>
</protein>
<name>TUSA_BUCBP</name>
<dbReference type="EMBL" id="AE016826">
    <property type="protein sequence ID" value="AAO27109.1"/>
    <property type="molecule type" value="Genomic_DNA"/>
</dbReference>
<dbReference type="RefSeq" id="WP_011091510.1">
    <property type="nucleotide sequence ID" value="NC_004545.1"/>
</dbReference>
<dbReference type="SMR" id="Q89AB9"/>
<dbReference type="STRING" id="224915.bbp_397"/>
<dbReference type="KEGG" id="bab:bbp_397"/>
<dbReference type="eggNOG" id="COG0425">
    <property type="taxonomic scope" value="Bacteria"/>
</dbReference>
<dbReference type="HOGENOM" id="CLU_165255_5_1_6"/>
<dbReference type="OrthoDB" id="9797352at2"/>
<dbReference type="Proteomes" id="UP000000601">
    <property type="component" value="Chromosome"/>
</dbReference>
<dbReference type="GO" id="GO:0005737">
    <property type="term" value="C:cytoplasm"/>
    <property type="evidence" value="ECO:0007669"/>
    <property type="project" value="UniProtKB-SubCell"/>
</dbReference>
<dbReference type="GO" id="GO:0097163">
    <property type="term" value="F:sulfur carrier activity"/>
    <property type="evidence" value="ECO:0007669"/>
    <property type="project" value="UniProtKB-UniRule"/>
</dbReference>
<dbReference type="GO" id="GO:0002143">
    <property type="term" value="P:tRNA wobble position uridine thiolation"/>
    <property type="evidence" value="ECO:0007669"/>
    <property type="project" value="InterPro"/>
</dbReference>
<dbReference type="CDD" id="cd03423">
    <property type="entry name" value="SirA"/>
    <property type="match status" value="1"/>
</dbReference>
<dbReference type="Gene3D" id="3.30.110.40">
    <property type="entry name" value="TusA-like domain"/>
    <property type="match status" value="1"/>
</dbReference>
<dbReference type="HAMAP" id="MF_00413">
    <property type="entry name" value="Thiourid_synth_A"/>
    <property type="match status" value="1"/>
</dbReference>
<dbReference type="InterPro" id="IPR022931">
    <property type="entry name" value="Sulphur_carrier_TusA"/>
</dbReference>
<dbReference type="InterPro" id="IPR001455">
    <property type="entry name" value="TusA-like"/>
</dbReference>
<dbReference type="InterPro" id="IPR036868">
    <property type="entry name" value="TusA-like_sf"/>
</dbReference>
<dbReference type="NCBIfam" id="NF001423">
    <property type="entry name" value="PRK00299.1"/>
    <property type="match status" value="1"/>
</dbReference>
<dbReference type="PANTHER" id="PTHR33279:SF2">
    <property type="entry name" value="SULFUR CARRIER PROTEIN TUSA"/>
    <property type="match status" value="1"/>
</dbReference>
<dbReference type="PANTHER" id="PTHR33279">
    <property type="entry name" value="SULFUR CARRIER PROTEIN YEDF-RELATED"/>
    <property type="match status" value="1"/>
</dbReference>
<dbReference type="Pfam" id="PF01206">
    <property type="entry name" value="TusA"/>
    <property type="match status" value="1"/>
</dbReference>
<dbReference type="SUPFAM" id="SSF64307">
    <property type="entry name" value="SirA-like"/>
    <property type="match status" value="1"/>
</dbReference>
<evidence type="ECO:0000255" key="1">
    <source>
        <dbReference type="HAMAP-Rule" id="MF_00413"/>
    </source>
</evidence>
<comment type="function">
    <text evidence="1">Sulfur carrier protein involved in sulfur trafficking in the cell. Part of a sulfur-relay system required for 2-thiolation during synthesis of 2-thiouridine of the modified wobble base 5-methylaminomethyl-2-thiouridine (mnm(5)s(2)U) in tRNA. Interacts with IscS and stimulates its cysteine desulfurase activity. Accepts an activated sulfur from IscS, which is then transferred to TusD, and thus determines the direction of sulfur flow from IscS to 2-thiouridine formation. Also appears to be involved in sulfur transfer for the biosynthesis of molybdopterin.</text>
</comment>
<comment type="pathway">
    <text evidence="1">tRNA modification.</text>
</comment>
<comment type="subunit">
    <text evidence="1">Interacts with IscS.</text>
</comment>
<comment type="subcellular location">
    <subcellularLocation>
        <location evidence="1">Cytoplasm</location>
    </subcellularLocation>
</comment>
<comment type="similarity">
    <text evidence="1">Belongs to the sulfur carrier protein TusA family.</text>
</comment>